<dbReference type="EMBL" id="BA000018">
    <property type="protein sequence ID" value="BAB41946.1"/>
    <property type="molecule type" value="Genomic_DNA"/>
</dbReference>
<dbReference type="PIR" id="G89848">
    <property type="entry name" value="G89848"/>
</dbReference>
<dbReference type="SMR" id="P67425"/>
<dbReference type="EnsemblBacteria" id="BAB41946">
    <property type="protein sequence ID" value="BAB41946"/>
    <property type="gene ID" value="BAB41946"/>
</dbReference>
<dbReference type="KEGG" id="sau:SA0713"/>
<dbReference type="HOGENOM" id="CLU_009621_2_1_9"/>
<dbReference type="GO" id="GO:0005737">
    <property type="term" value="C:cytoplasm"/>
    <property type="evidence" value="ECO:0007669"/>
    <property type="project" value="UniProtKB-SubCell"/>
</dbReference>
<dbReference type="GO" id="GO:0009380">
    <property type="term" value="C:excinuclease repair complex"/>
    <property type="evidence" value="ECO:0007669"/>
    <property type="project" value="InterPro"/>
</dbReference>
<dbReference type="GO" id="GO:0005524">
    <property type="term" value="F:ATP binding"/>
    <property type="evidence" value="ECO:0007669"/>
    <property type="project" value="UniProtKB-UniRule"/>
</dbReference>
<dbReference type="GO" id="GO:0016887">
    <property type="term" value="F:ATP hydrolysis activity"/>
    <property type="evidence" value="ECO:0007669"/>
    <property type="project" value="InterPro"/>
</dbReference>
<dbReference type="GO" id="GO:0003677">
    <property type="term" value="F:DNA binding"/>
    <property type="evidence" value="ECO:0007669"/>
    <property type="project" value="UniProtKB-UniRule"/>
</dbReference>
<dbReference type="GO" id="GO:0009381">
    <property type="term" value="F:excinuclease ABC activity"/>
    <property type="evidence" value="ECO:0007669"/>
    <property type="project" value="UniProtKB-UniRule"/>
</dbReference>
<dbReference type="GO" id="GO:0006289">
    <property type="term" value="P:nucleotide-excision repair"/>
    <property type="evidence" value="ECO:0007669"/>
    <property type="project" value="UniProtKB-UniRule"/>
</dbReference>
<dbReference type="GO" id="GO:0009432">
    <property type="term" value="P:SOS response"/>
    <property type="evidence" value="ECO:0007669"/>
    <property type="project" value="UniProtKB-UniRule"/>
</dbReference>
<dbReference type="CDD" id="cd17916">
    <property type="entry name" value="DEXHc_UvrB"/>
    <property type="match status" value="1"/>
</dbReference>
<dbReference type="CDD" id="cd18790">
    <property type="entry name" value="SF2_C_UvrB"/>
    <property type="match status" value="1"/>
</dbReference>
<dbReference type="Gene3D" id="3.40.50.300">
    <property type="entry name" value="P-loop containing nucleotide triphosphate hydrolases"/>
    <property type="match status" value="3"/>
</dbReference>
<dbReference type="Gene3D" id="4.10.860.10">
    <property type="entry name" value="UVR domain"/>
    <property type="match status" value="1"/>
</dbReference>
<dbReference type="HAMAP" id="MF_00204">
    <property type="entry name" value="UvrB"/>
    <property type="match status" value="1"/>
</dbReference>
<dbReference type="InterPro" id="IPR006935">
    <property type="entry name" value="Helicase/UvrB_N"/>
</dbReference>
<dbReference type="InterPro" id="IPR014001">
    <property type="entry name" value="Helicase_ATP-bd"/>
</dbReference>
<dbReference type="InterPro" id="IPR001650">
    <property type="entry name" value="Helicase_C-like"/>
</dbReference>
<dbReference type="InterPro" id="IPR027417">
    <property type="entry name" value="P-loop_NTPase"/>
</dbReference>
<dbReference type="InterPro" id="IPR001943">
    <property type="entry name" value="UVR_dom"/>
</dbReference>
<dbReference type="InterPro" id="IPR036876">
    <property type="entry name" value="UVR_dom_sf"/>
</dbReference>
<dbReference type="InterPro" id="IPR004807">
    <property type="entry name" value="UvrB"/>
</dbReference>
<dbReference type="InterPro" id="IPR041471">
    <property type="entry name" value="UvrB_inter"/>
</dbReference>
<dbReference type="InterPro" id="IPR024759">
    <property type="entry name" value="UvrB_YAD/RRR_dom"/>
</dbReference>
<dbReference type="NCBIfam" id="NF003673">
    <property type="entry name" value="PRK05298.1"/>
    <property type="match status" value="1"/>
</dbReference>
<dbReference type="NCBIfam" id="TIGR00631">
    <property type="entry name" value="uvrb"/>
    <property type="match status" value="1"/>
</dbReference>
<dbReference type="PANTHER" id="PTHR24029">
    <property type="entry name" value="UVRABC SYSTEM PROTEIN B"/>
    <property type="match status" value="1"/>
</dbReference>
<dbReference type="PANTHER" id="PTHR24029:SF0">
    <property type="entry name" value="UVRABC SYSTEM PROTEIN B"/>
    <property type="match status" value="1"/>
</dbReference>
<dbReference type="Pfam" id="PF00271">
    <property type="entry name" value="Helicase_C"/>
    <property type="match status" value="1"/>
</dbReference>
<dbReference type="Pfam" id="PF04851">
    <property type="entry name" value="ResIII"/>
    <property type="match status" value="1"/>
</dbReference>
<dbReference type="Pfam" id="PF02151">
    <property type="entry name" value="UVR"/>
    <property type="match status" value="1"/>
</dbReference>
<dbReference type="Pfam" id="PF12344">
    <property type="entry name" value="UvrB"/>
    <property type="match status" value="1"/>
</dbReference>
<dbReference type="Pfam" id="PF17757">
    <property type="entry name" value="UvrB_inter"/>
    <property type="match status" value="1"/>
</dbReference>
<dbReference type="SMART" id="SM00487">
    <property type="entry name" value="DEXDc"/>
    <property type="match status" value="1"/>
</dbReference>
<dbReference type="SMART" id="SM00490">
    <property type="entry name" value="HELICc"/>
    <property type="match status" value="1"/>
</dbReference>
<dbReference type="SUPFAM" id="SSF46600">
    <property type="entry name" value="C-terminal UvrC-binding domain of UvrB"/>
    <property type="match status" value="1"/>
</dbReference>
<dbReference type="SUPFAM" id="SSF52540">
    <property type="entry name" value="P-loop containing nucleoside triphosphate hydrolases"/>
    <property type="match status" value="2"/>
</dbReference>
<dbReference type="PROSITE" id="PS51192">
    <property type="entry name" value="HELICASE_ATP_BIND_1"/>
    <property type="match status" value="1"/>
</dbReference>
<dbReference type="PROSITE" id="PS51194">
    <property type="entry name" value="HELICASE_CTER"/>
    <property type="match status" value="1"/>
</dbReference>
<dbReference type="PROSITE" id="PS50151">
    <property type="entry name" value="UVR"/>
    <property type="match status" value="1"/>
</dbReference>
<feature type="chain" id="PRO_0000138426" description="UvrABC system protein B">
    <location>
        <begin position="1"/>
        <end position="663"/>
    </location>
</feature>
<feature type="domain" description="Helicase ATP-binding" evidence="1">
    <location>
        <begin position="30"/>
        <end position="417"/>
    </location>
</feature>
<feature type="domain" description="Helicase C-terminal" evidence="1">
    <location>
        <begin position="434"/>
        <end position="600"/>
    </location>
</feature>
<feature type="domain" description="UVR" evidence="1">
    <location>
        <begin position="627"/>
        <end position="662"/>
    </location>
</feature>
<feature type="short sequence motif" description="Beta-hairpin">
    <location>
        <begin position="96"/>
        <end position="119"/>
    </location>
</feature>
<feature type="binding site" evidence="1">
    <location>
        <begin position="43"/>
        <end position="50"/>
    </location>
    <ligand>
        <name>ATP</name>
        <dbReference type="ChEBI" id="CHEBI:30616"/>
    </ligand>
</feature>
<sequence length="663" mass="76867">MTMVEHYPFKIHSDFEPQGDQPQAIKEIVDGIKAGKRHQTLLGATGTGKTFTMSNVIKEVGKPTLIIAHNKTLAGQLYSEFKEFFPENRVEYFVSYYDYYQPEAYVPSTDTFIEKDASINDEIDQLRHSATSALFERDDVIIIASVSCIYGLGNPEEYKDLVVSVRVGMEMDRSELLRKLVDVQYTRNDIDFQRGTFRVRGDVVEIFPASKEELCIRVEFFGDEIDRIREVNYLTGEVLKEREHFAIFPASHFVTREEKLKVAIERIEKELEERLKELRDENKLLEAQRLEQRTNYDLEMMREMGFCSGIENYSVHLTLRPLGSTPYTLLDYFGDDWLVMIDESHVTLPQVRGMYNGDRARKQVLVDHGFRLPSALDNRPLKFEEFEEKTKQLVYVSATPGPYEIEHTDKMVEQIIRPTGLLDPKIEVRPTENQIDDLLSEIQTRVERNERVLVTTLTKKMSEDLTTYMKEAGIKVNYLHSEIKTLERIEIIRDLRMGTYDVIVGINLLREGIDIPEVSLVVILDADKEGFLRSNRSLIQTIGRAARNDKGEVIMYADKMTDSMKYAIDETQRRREIQMKHNEKHGITPKTINKKIHDLISATVENDENNDKAQTVIPKKMTKKERQKTIDNIEKEMKQAAKDLDFEKATELRDMLFELKAEG</sequence>
<keyword id="KW-0067">ATP-binding</keyword>
<keyword id="KW-0963">Cytoplasm</keyword>
<keyword id="KW-0227">DNA damage</keyword>
<keyword id="KW-0228">DNA excision</keyword>
<keyword id="KW-0234">DNA repair</keyword>
<keyword id="KW-0267">Excision nuclease</keyword>
<keyword id="KW-0547">Nucleotide-binding</keyword>
<keyword id="KW-0742">SOS response</keyword>
<gene>
    <name evidence="1" type="primary">uvrB</name>
    <name type="ordered locus">SA0713</name>
</gene>
<protein>
    <recommendedName>
        <fullName evidence="1">UvrABC system protein B</fullName>
        <shortName evidence="1">Protein UvrB</shortName>
    </recommendedName>
    <alternativeName>
        <fullName evidence="1">Excinuclease ABC subunit B</fullName>
    </alternativeName>
</protein>
<reference key="1">
    <citation type="journal article" date="2001" name="Lancet">
        <title>Whole genome sequencing of meticillin-resistant Staphylococcus aureus.</title>
        <authorList>
            <person name="Kuroda M."/>
            <person name="Ohta T."/>
            <person name="Uchiyama I."/>
            <person name="Baba T."/>
            <person name="Yuzawa H."/>
            <person name="Kobayashi I."/>
            <person name="Cui L."/>
            <person name="Oguchi A."/>
            <person name="Aoki K."/>
            <person name="Nagai Y."/>
            <person name="Lian J.-Q."/>
            <person name="Ito T."/>
            <person name="Kanamori M."/>
            <person name="Matsumaru H."/>
            <person name="Maruyama A."/>
            <person name="Murakami H."/>
            <person name="Hosoyama A."/>
            <person name="Mizutani-Ui Y."/>
            <person name="Takahashi N.K."/>
            <person name="Sawano T."/>
            <person name="Inoue R."/>
            <person name="Kaito C."/>
            <person name="Sekimizu K."/>
            <person name="Hirakawa H."/>
            <person name="Kuhara S."/>
            <person name="Goto S."/>
            <person name="Yabuzaki J."/>
            <person name="Kanehisa M."/>
            <person name="Yamashita A."/>
            <person name="Oshima K."/>
            <person name="Furuya K."/>
            <person name="Yoshino C."/>
            <person name="Shiba T."/>
            <person name="Hattori M."/>
            <person name="Ogasawara N."/>
            <person name="Hayashi H."/>
            <person name="Hiramatsu K."/>
        </authorList>
    </citation>
    <scope>NUCLEOTIDE SEQUENCE [LARGE SCALE GENOMIC DNA]</scope>
    <source>
        <strain>N315</strain>
    </source>
</reference>
<reference key="2">
    <citation type="submission" date="2007-10" db="UniProtKB">
        <title>Shotgun proteomic analysis of total and membrane protein extracts of S. aureus strain N315.</title>
        <authorList>
            <person name="Vaezzadeh A.R."/>
            <person name="Deshusses J."/>
            <person name="Lescuyer P."/>
            <person name="Hochstrasser D.F."/>
        </authorList>
    </citation>
    <scope>IDENTIFICATION BY MASS SPECTROMETRY [LARGE SCALE ANALYSIS]</scope>
    <source>
        <strain>N315</strain>
    </source>
</reference>
<proteinExistence type="evidence at protein level"/>
<organism>
    <name type="scientific">Staphylococcus aureus (strain N315)</name>
    <dbReference type="NCBI Taxonomy" id="158879"/>
    <lineage>
        <taxon>Bacteria</taxon>
        <taxon>Bacillati</taxon>
        <taxon>Bacillota</taxon>
        <taxon>Bacilli</taxon>
        <taxon>Bacillales</taxon>
        <taxon>Staphylococcaceae</taxon>
        <taxon>Staphylococcus</taxon>
    </lineage>
</organism>
<evidence type="ECO:0000255" key="1">
    <source>
        <dbReference type="HAMAP-Rule" id="MF_00204"/>
    </source>
</evidence>
<comment type="function">
    <text evidence="1">The UvrABC repair system catalyzes the recognition and processing of DNA lesions. A damage recognition complex composed of 2 UvrA and 2 UvrB subunits scans DNA for abnormalities. Upon binding of the UvrA(2)B(2) complex to a putative damaged site, the DNA wraps around one UvrB monomer. DNA wrap is dependent on ATP binding by UvrB and probably causes local melting of the DNA helix, facilitating insertion of UvrB beta-hairpin between the DNA strands. Then UvrB probes one DNA strand for the presence of a lesion. If a lesion is found the UvrA subunits dissociate and the UvrB-DNA preincision complex is formed. This complex is subsequently bound by UvrC and the second UvrB is released. If no lesion is found, the DNA wraps around the other UvrB subunit that will check the other stand for damage.</text>
</comment>
<comment type="subunit">
    <text evidence="1">Forms a heterotetramer with UvrA during the search for lesions. Interacts with UvrC in an incision complex.</text>
</comment>
<comment type="subcellular location">
    <subcellularLocation>
        <location evidence="1">Cytoplasm</location>
    </subcellularLocation>
</comment>
<comment type="domain">
    <text evidence="1">The beta-hairpin motif is involved in DNA binding.</text>
</comment>
<comment type="similarity">
    <text evidence="1">Belongs to the UvrB family.</text>
</comment>
<name>UVRB_STAAN</name>
<accession>P67425</accession>
<accession>Q99VL7</accession>